<gene>
    <name type="primary">RRP3</name>
    <name type="ORF">PGUG_05502</name>
</gene>
<evidence type="ECO:0000250" key="1"/>
<evidence type="ECO:0000255" key="2">
    <source>
        <dbReference type="PROSITE-ProRule" id="PRU00541"/>
    </source>
</evidence>
<evidence type="ECO:0000255" key="3">
    <source>
        <dbReference type="PROSITE-ProRule" id="PRU00542"/>
    </source>
</evidence>
<evidence type="ECO:0000256" key="4">
    <source>
        <dbReference type="SAM" id="MobiDB-lite"/>
    </source>
</evidence>
<evidence type="ECO:0000305" key="5"/>
<proteinExistence type="inferred from homology"/>
<keyword id="KW-0067">ATP-binding</keyword>
<keyword id="KW-0347">Helicase</keyword>
<keyword id="KW-0378">Hydrolase</keyword>
<keyword id="KW-0547">Nucleotide-binding</keyword>
<keyword id="KW-0539">Nucleus</keyword>
<keyword id="KW-1185">Reference proteome</keyword>
<keyword id="KW-0690">Ribosome biogenesis</keyword>
<keyword id="KW-0694">RNA-binding</keyword>
<keyword id="KW-0698">rRNA processing</keyword>
<accession>A5DQF1</accession>
<dbReference type="EC" id="3.6.4.-"/>
<dbReference type="EMBL" id="CH408161">
    <property type="protein sequence ID" value="EDK41404.2"/>
    <property type="molecule type" value="Genomic_DNA"/>
</dbReference>
<dbReference type="RefSeq" id="XP_001482482.1">
    <property type="nucleotide sequence ID" value="XM_001482432.1"/>
</dbReference>
<dbReference type="SMR" id="A5DQF1"/>
<dbReference type="FunCoup" id="A5DQF1">
    <property type="interactions" value="1131"/>
</dbReference>
<dbReference type="STRING" id="294746.A5DQF1"/>
<dbReference type="GeneID" id="5124146"/>
<dbReference type="KEGG" id="pgu:PGUG_05502"/>
<dbReference type="VEuPathDB" id="FungiDB:PGUG_05502"/>
<dbReference type="eggNOG" id="KOG0330">
    <property type="taxonomic scope" value="Eukaryota"/>
</dbReference>
<dbReference type="HOGENOM" id="CLU_003041_1_1_1"/>
<dbReference type="InParanoid" id="A5DQF1"/>
<dbReference type="OMA" id="GIGIKCC"/>
<dbReference type="OrthoDB" id="10261904at2759"/>
<dbReference type="Proteomes" id="UP000001997">
    <property type="component" value="Unassembled WGS sequence"/>
</dbReference>
<dbReference type="GO" id="GO:0005829">
    <property type="term" value="C:cytosol"/>
    <property type="evidence" value="ECO:0007669"/>
    <property type="project" value="TreeGrafter"/>
</dbReference>
<dbReference type="GO" id="GO:0005730">
    <property type="term" value="C:nucleolus"/>
    <property type="evidence" value="ECO:0007669"/>
    <property type="project" value="EnsemblFungi"/>
</dbReference>
<dbReference type="GO" id="GO:0032040">
    <property type="term" value="C:small-subunit processome"/>
    <property type="evidence" value="ECO:0007669"/>
    <property type="project" value="EnsemblFungi"/>
</dbReference>
<dbReference type="GO" id="GO:0005524">
    <property type="term" value="F:ATP binding"/>
    <property type="evidence" value="ECO:0007669"/>
    <property type="project" value="UniProtKB-KW"/>
</dbReference>
<dbReference type="GO" id="GO:0016787">
    <property type="term" value="F:hydrolase activity"/>
    <property type="evidence" value="ECO:0007669"/>
    <property type="project" value="UniProtKB-KW"/>
</dbReference>
<dbReference type="GO" id="GO:0003723">
    <property type="term" value="F:RNA binding"/>
    <property type="evidence" value="ECO:0007669"/>
    <property type="project" value="UniProtKB-KW"/>
</dbReference>
<dbReference type="GO" id="GO:0003724">
    <property type="term" value="F:RNA helicase activity"/>
    <property type="evidence" value="ECO:0007669"/>
    <property type="project" value="EnsemblFungi"/>
</dbReference>
<dbReference type="GO" id="GO:0000462">
    <property type="term" value="P:maturation of SSU-rRNA from tricistronic rRNA transcript (SSU-rRNA, 5.8S rRNA, LSU-rRNA)"/>
    <property type="evidence" value="ECO:0007669"/>
    <property type="project" value="EnsemblFungi"/>
</dbReference>
<dbReference type="CDD" id="cd17954">
    <property type="entry name" value="DEADc_DDX47"/>
    <property type="match status" value="1"/>
</dbReference>
<dbReference type="CDD" id="cd18787">
    <property type="entry name" value="SF2_C_DEAD"/>
    <property type="match status" value="1"/>
</dbReference>
<dbReference type="FunFam" id="3.40.50.300:FF:000681">
    <property type="entry name" value="probable ATP-dependent RNA helicase DDX47"/>
    <property type="match status" value="1"/>
</dbReference>
<dbReference type="Gene3D" id="3.40.50.300">
    <property type="entry name" value="P-loop containing nucleotide triphosphate hydrolases"/>
    <property type="match status" value="2"/>
</dbReference>
<dbReference type="InterPro" id="IPR044765">
    <property type="entry name" value="DDX47/Rrp3_DEADc"/>
</dbReference>
<dbReference type="InterPro" id="IPR011545">
    <property type="entry name" value="DEAD/DEAH_box_helicase_dom"/>
</dbReference>
<dbReference type="InterPro" id="IPR050079">
    <property type="entry name" value="DEAD_box_RNA_helicase"/>
</dbReference>
<dbReference type="InterPro" id="IPR014001">
    <property type="entry name" value="Helicase_ATP-bd"/>
</dbReference>
<dbReference type="InterPro" id="IPR001650">
    <property type="entry name" value="Helicase_C-like"/>
</dbReference>
<dbReference type="InterPro" id="IPR027417">
    <property type="entry name" value="P-loop_NTPase"/>
</dbReference>
<dbReference type="InterPro" id="IPR000629">
    <property type="entry name" value="RNA-helicase_DEAD-box_CS"/>
</dbReference>
<dbReference type="InterPro" id="IPR014014">
    <property type="entry name" value="RNA_helicase_DEAD_Q_motif"/>
</dbReference>
<dbReference type="PANTHER" id="PTHR47959:SF24">
    <property type="entry name" value="ATP-DEPENDENT RNA HELICASE"/>
    <property type="match status" value="1"/>
</dbReference>
<dbReference type="PANTHER" id="PTHR47959">
    <property type="entry name" value="ATP-DEPENDENT RNA HELICASE RHLE-RELATED"/>
    <property type="match status" value="1"/>
</dbReference>
<dbReference type="Pfam" id="PF00270">
    <property type="entry name" value="DEAD"/>
    <property type="match status" value="1"/>
</dbReference>
<dbReference type="Pfam" id="PF00271">
    <property type="entry name" value="Helicase_C"/>
    <property type="match status" value="1"/>
</dbReference>
<dbReference type="SMART" id="SM00487">
    <property type="entry name" value="DEXDc"/>
    <property type="match status" value="1"/>
</dbReference>
<dbReference type="SMART" id="SM00490">
    <property type="entry name" value="HELICc"/>
    <property type="match status" value="1"/>
</dbReference>
<dbReference type="SUPFAM" id="SSF52540">
    <property type="entry name" value="P-loop containing nucleoside triphosphate hydrolases"/>
    <property type="match status" value="1"/>
</dbReference>
<dbReference type="PROSITE" id="PS00039">
    <property type="entry name" value="DEAD_ATP_HELICASE"/>
    <property type="match status" value="1"/>
</dbReference>
<dbReference type="PROSITE" id="PS51192">
    <property type="entry name" value="HELICASE_ATP_BIND_1"/>
    <property type="match status" value="1"/>
</dbReference>
<dbReference type="PROSITE" id="PS51194">
    <property type="entry name" value="HELICASE_CTER"/>
    <property type="match status" value="1"/>
</dbReference>
<dbReference type="PROSITE" id="PS51195">
    <property type="entry name" value="Q_MOTIF"/>
    <property type="match status" value="1"/>
</dbReference>
<reference key="1">
    <citation type="journal article" date="2009" name="Nature">
        <title>Evolution of pathogenicity and sexual reproduction in eight Candida genomes.</title>
        <authorList>
            <person name="Butler G."/>
            <person name="Rasmussen M.D."/>
            <person name="Lin M.F."/>
            <person name="Santos M.A.S."/>
            <person name="Sakthikumar S."/>
            <person name="Munro C.A."/>
            <person name="Rheinbay E."/>
            <person name="Grabherr M."/>
            <person name="Forche A."/>
            <person name="Reedy J.L."/>
            <person name="Agrafioti I."/>
            <person name="Arnaud M.B."/>
            <person name="Bates S."/>
            <person name="Brown A.J.P."/>
            <person name="Brunke S."/>
            <person name="Costanzo M.C."/>
            <person name="Fitzpatrick D.A."/>
            <person name="de Groot P.W.J."/>
            <person name="Harris D."/>
            <person name="Hoyer L.L."/>
            <person name="Hube B."/>
            <person name="Klis F.M."/>
            <person name="Kodira C."/>
            <person name="Lennard N."/>
            <person name="Logue M.E."/>
            <person name="Martin R."/>
            <person name="Neiman A.M."/>
            <person name="Nikolaou E."/>
            <person name="Quail M.A."/>
            <person name="Quinn J."/>
            <person name="Santos M.C."/>
            <person name="Schmitzberger F.F."/>
            <person name="Sherlock G."/>
            <person name="Shah P."/>
            <person name="Silverstein K.A.T."/>
            <person name="Skrzypek M.S."/>
            <person name="Soll D."/>
            <person name="Staggs R."/>
            <person name="Stansfield I."/>
            <person name="Stumpf M.P.H."/>
            <person name="Sudbery P.E."/>
            <person name="Srikantha T."/>
            <person name="Zeng Q."/>
            <person name="Berman J."/>
            <person name="Berriman M."/>
            <person name="Heitman J."/>
            <person name="Gow N.A.R."/>
            <person name="Lorenz M.C."/>
            <person name="Birren B.W."/>
            <person name="Kellis M."/>
            <person name="Cuomo C.A."/>
        </authorList>
    </citation>
    <scope>NUCLEOTIDE SEQUENCE [LARGE SCALE GENOMIC DNA]</scope>
    <source>
        <strain>ATCC 6260 / CBS 566 / DSM 6381 / JCM 1539 / NBRC 10279 / NRRL Y-324</strain>
    </source>
</reference>
<comment type="function">
    <text evidence="1">Required for pre-ribosomal RNA processing. Involved in the maturation of the 35S-pre-rRNA and to its cleavage to mature 18S rRNA (By similarity).</text>
</comment>
<comment type="subcellular location">
    <subcellularLocation>
        <location evidence="5">Nucleus</location>
    </subcellularLocation>
</comment>
<comment type="domain">
    <text>The Q motif is unique to and characteristic of the DEAD box family of RNA helicases and controls ATP binding and hydrolysis.</text>
</comment>
<comment type="similarity">
    <text evidence="5">Belongs to the DEAD box helicase family. DDX47/RRP3 subfamily.</text>
</comment>
<organism>
    <name type="scientific">Meyerozyma guilliermondii (strain ATCC 6260 / CBS 566 / DSM 6381 / JCM 1539 / NBRC 10279 / NRRL Y-324)</name>
    <name type="common">Yeast</name>
    <name type="synonym">Candida guilliermondii</name>
    <dbReference type="NCBI Taxonomy" id="294746"/>
    <lineage>
        <taxon>Eukaryota</taxon>
        <taxon>Fungi</taxon>
        <taxon>Dikarya</taxon>
        <taxon>Ascomycota</taxon>
        <taxon>Saccharomycotina</taxon>
        <taxon>Pichiomycetes</taxon>
        <taxon>Debaryomycetaceae</taxon>
        <taxon>Meyerozyma</taxon>
    </lineage>
</organism>
<protein>
    <recommendedName>
        <fullName>ATP-dependent rRNA helicase RRP3</fullName>
        <ecNumber>3.6.4.-</ecNumber>
    </recommendedName>
</protein>
<sequence>MALKPEKVKSSKSASTVDAKSLAEKIKKNALKQKKQAPVTEKPEEIVETTSEASQDVNSEQQFHTFSELNLVPELMEAIEKLKYTKPTPIQSGAIPHALEGKDIIGLAQTGSGKTAAFAIPILQSLWEAQRPYYALVLAPTRELAYQIKETFDALGSGMGVRSVCIVGGMDMMDQARDLMRKPHILVATPGRIMDHLENTKGFSLKSLQYLVMDEADRLLDMDFGPALDKILKVIPTKRTTYLFSATMTNKIAKLQRASLHEPVKVAVSNKYQTADNLVQSMMLVSDGYKNTFLIHLLNEFMGKSIIVFTRTCAHTQRSTLLARILGFSAVPLHGQLTQSQRLGSLNKFKSGKANILIATDVAARGLDIPSVDVVINYDIPTDSKAYIHRVGRTARAGKSGKSISLVTQYDLEMYLRIESVLGFKLPKDPSPPRDVLNALHVHVDRASAEAIKQTKDFHEKRTKKKRDDRDREER</sequence>
<name>RRP3_PICGU</name>
<feature type="chain" id="PRO_0000294653" description="ATP-dependent rRNA helicase RRP3">
    <location>
        <begin position="1"/>
        <end position="475"/>
    </location>
</feature>
<feature type="domain" description="Helicase ATP-binding" evidence="2">
    <location>
        <begin position="95"/>
        <end position="266"/>
    </location>
</feature>
<feature type="domain" description="Helicase C-terminal" evidence="3">
    <location>
        <begin position="293"/>
        <end position="437"/>
    </location>
</feature>
<feature type="region of interest" description="Disordered" evidence="4">
    <location>
        <begin position="30"/>
        <end position="59"/>
    </location>
</feature>
<feature type="region of interest" description="Disordered" evidence="4">
    <location>
        <begin position="451"/>
        <end position="475"/>
    </location>
</feature>
<feature type="short sequence motif" description="Q motif">
    <location>
        <begin position="64"/>
        <end position="92"/>
    </location>
</feature>
<feature type="short sequence motif" description="DEAD box">
    <location>
        <begin position="214"/>
        <end position="217"/>
    </location>
</feature>
<feature type="compositionally biased region" description="Polar residues" evidence="4">
    <location>
        <begin position="48"/>
        <end position="59"/>
    </location>
</feature>
<feature type="binding site" evidence="2">
    <location>
        <begin position="108"/>
        <end position="115"/>
    </location>
    <ligand>
        <name>ATP</name>
        <dbReference type="ChEBI" id="CHEBI:30616"/>
    </ligand>
</feature>